<accession>B8E9K8</accession>
<dbReference type="EMBL" id="CP001252">
    <property type="protein sequence ID" value="ACK45223.1"/>
    <property type="molecule type" value="Genomic_DNA"/>
</dbReference>
<dbReference type="SMR" id="B8E9K8"/>
<dbReference type="KEGG" id="sbp:Sbal223_0704"/>
<dbReference type="HOGENOM" id="CLU_059558_1_1_6"/>
<dbReference type="Proteomes" id="UP000002507">
    <property type="component" value="Chromosome"/>
</dbReference>
<dbReference type="GO" id="GO:0005524">
    <property type="term" value="F:ATP binding"/>
    <property type="evidence" value="ECO:0007669"/>
    <property type="project" value="UniProtKB-UniRule"/>
</dbReference>
<dbReference type="GO" id="GO:0005525">
    <property type="term" value="F:GTP binding"/>
    <property type="evidence" value="ECO:0007669"/>
    <property type="project" value="UniProtKB-UniRule"/>
</dbReference>
<dbReference type="HAMAP" id="MF_00636">
    <property type="entry name" value="RapZ_like"/>
    <property type="match status" value="1"/>
</dbReference>
<dbReference type="InterPro" id="IPR027417">
    <property type="entry name" value="P-loop_NTPase"/>
</dbReference>
<dbReference type="InterPro" id="IPR005337">
    <property type="entry name" value="RapZ-like"/>
</dbReference>
<dbReference type="InterPro" id="IPR053930">
    <property type="entry name" value="RapZ-like_N"/>
</dbReference>
<dbReference type="InterPro" id="IPR053931">
    <property type="entry name" value="RapZ_C"/>
</dbReference>
<dbReference type="NCBIfam" id="NF003828">
    <property type="entry name" value="PRK05416.1"/>
    <property type="match status" value="1"/>
</dbReference>
<dbReference type="PANTHER" id="PTHR30448">
    <property type="entry name" value="RNASE ADAPTER PROTEIN RAPZ"/>
    <property type="match status" value="1"/>
</dbReference>
<dbReference type="PANTHER" id="PTHR30448:SF0">
    <property type="entry name" value="RNASE ADAPTER PROTEIN RAPZ"/>
    <property type="match status" value="1"/>
</dbReference>
<dbReference type="Pfam" id="PF22740">
    <property type="entry name" value="PapZ_C"/>
    <property type="match status" value="1"/>
</dbReference>
<dbReference type="Pfam" id="PF03668">
    <property type="entry name" value="RapZ-like_N"/>
    <property type="match status" value="1"/>
</dbReference>
<dbReference type="PIRSF" id="PIRSF005052">
    <property type="entry name" value="P-loopkin"/>
    <property type="match status" value="1"/>
</dbReference>
<dbReference type="SUPFAM" id="SSF52540">
    <property type="entry name" value="P-loop containing nucleoside triphosphate hydrolases"/>
    <property type="match status" value="1"/>
</dbReference>
<sequence>MKLVIVSGRSGSGKSVALRVLEDLGYYCVDNLPLPLIGTLLEQLKGSNDLVAISVDVRNMPEQDKVLVKQLASLPPDTELTSFFLNSSDKILLKRYSETRRLHPLSKSQVSLQEAIKLEGKLLEPMSKLVDHYIDTSNLNIYDLSDQVRQILLGSVDKELVINFESFGFKHGMPTEADFMFDVRFLPNPHWELALRPLTGLDEPVAEFLNRQPLVNKFIWQIENLLETWLPHLERNNRSYLTVAIGCTGGQHRSVYVAEQLAKRFSNGKHKVYARHRELNNAKA</sequence>
<keyword id="KW-0067">ATP-binding</keyword>
<keyword id="KW-0342">GTP-binding</keyword>
<keyword id="KW-0547">Nucleotide-binding</keyword>
<feature type="chain" id="PRO_1000147367" description="Nucleotide-binding protein Sbal223_0704">
    <location>
        <begin position="1"/>
        <end position="284"/>
    </location>
</feature>
<feature type="binding site" evidence="1">
    <location>
        <begin position="8"/>
        <end position="15"/>
    </location>
    <ligand>
        <name>ATP</name>
        <dbReference type="ChEBI" id="CHEBI:30616"/>
    </ligand>
</feature>
<feature type="binding site" evidence="1">
    <location>
        <begin position="56"/>
        <end position="59"/>
    </location>
    <ligand>
        <name>GTP</name>
        <dbReference type="ChEBI" id="CHEBI:37565"/>
    </ligand>
</feature>
<proteinExistence type="inferred from homology"/>
<reference key="1">
    <citation type="submission" date="2008-12" db="EMBL/GenBank/DDBJ databases">
        <title>Complete sequence of chromosome of Shewanella baltica OS223.</title>
        <authorList>
            <consortium name="US DOE Joint Genome Institute"/>
            <person name="Lucas S."/>
            <person name="Copeland A."/>
            <person name="Lapidus A."/>
            <person name="Glavina del Rio T."/>
            <person name="Dalin E."/>
            <person name="Tice H."/>
            <person name="Bruce D."/>
            <person name="Goodwin L."/>
            <person name="Pitluck S."/>
            <person name="Chertkov O."/>
            <person name="Meincke L."/>
            <person name="Brettin T."/>
            <person name="Detter J.C."/>
            <person name="Han C."/>
            <person name="Kuske C.R."/>
            <person name="Larimer F."/>
            <person name="Land M."/>
            <person name="Hauser L."/>
            <person name="Kyrpides N."/>
            <person name="Ovchinnikova G."/>
            <person name="Brettar I."/>
            <person name="Rodrigues J."/>
            <person name="Konstantinidis K."/>
            <person name="Tiedje J."/>
        </authorList>
    </citation>
    <scope>NUCLEOTIDE SEQUENCE [LARGE SCALE GENOMIC DNA]</scope>
    <source>
        <strain>OS223</strain>
    </source>
</reference>
<organism>
    <name type="scientific">Shewanella baltica (strain OS223)</name>
    <dbReference type="NCBI Taxonomy" id="407976"/>
    <lineage>
        <taxon>Bacteria</taxon>
        <taxon>Pseudomonadati</taxon>
        <taxon>Pseudomonadota</taxon>
        <taxon>Gammaproteobacteria</taxon>
        <taxon>Alteromonadales</taxon>
        <taxon>Shewanellaceae</taxon>
        <taxon>Shewanella</taxon>
    </lineage>
</organism>
<gene>
    <name type="ordered locus">Sbal223_0704</name>
</gene>
<evidence type="ECO:0000255" key="1">
    <source>
        <dbReference type="HAMAP-Rule" id="MF_00636"/>
    </source>
</evidence>
<name>Y704_SHEB2</name>
<comment type="function">
    <text evidence="1">Displays ATPase and GTPase activities.</text>
</comment>
<comment type="similarity">
    <text evidence="1">Belongs to the RapZ-like family.</text>
</comment>
<protein>
    <recommendedName>
        <fullName evidence="1">Nucleotide-binding protein Sbal223_0704</fullName>
    </recommendedName>
</protein>